<reference key="1">
    <citation type="journal article" date="2001" name="Comp. Biochem. Physiol.">
        <title>Soluble proteins of the nacre of the giant oyster Pinctada maxima and of the abalone Haliotis tuberculata: extraction and partial analysis of nacre proteins.</title>
        <authorList>
            <person name="Bedouet L."/>
            <person name="Schuller M.J."/>
            <person name="Marin F."/>
            <person name="Milet C."/>
            <person name="Lopez E."/>
            <person name="Giraud M."/>
        </authorList>
    </citation>
    <scope>PROTEIN SEQUENCE</scope>
    <scope>FUNCTION</scope>
    <scope>SUBUNIT</scope>
    <source>
        <tissue>Nacre</tissue>
    </source>
</reference>
<reference key="2">
    <citation type="journal article" date="1997" name="C. R. Acad. Sci. III, Sci. Vie">
        <title>Reconstruction of human maxillary defects with nacre powder: histological evidence for bone regeneration.</title>
        <authorList>
            <person name="Atlan G."/>
            <person name="Balmain N."/>
            <person name="Berland S."/>
            <person name="Vidal B."/>
            <person name="Lopez E."/>
        </authorList>
    </citation>
    <scope>PHARMACEUTICAL</scope>
</reference>
<sequence length="21" mass="2728">YQRXSRYYYYXGPPDDIDDRY</sequence>
<feature type="chain" id="PRO_0000379785" description="Conchiolin protein p20">
    <location>
        <begin position="1"/>
        <end position="21" status="greater than"/>
    </location>
</feature>
<feature type="region of interest" description="Disordered" evidence="1">
    <location>
        <begin position="1"/>
        <end position="21"/>
    </location>
</feature>
<feature type="compositionally biased region" description="Low complexity" evidence="1">
    <location>
        <begin position="1"/>
        <end position="14"/>
    </location>
</feature>
<feature type="sequence variant">
    <original>S</original>
    <variation>D</variation>
    <location>
        <position position="5"/>
    </location>
</feature>
<feature type="sequence variant">
    <original>G</original>
    <variation>L</variation>
    <location>
        <position position="12"/>
    </location>
</feature>
<feature type="sequence variant">
    <original>P</original>
    <variation>L</variation>
    <location>
        <position position="13"/>
    </location>
</feature>
<feature type="sequence variant">
    <original>I</original>
    <variation>E</variation>
    <location>
        <position position="17"/>
    </location>
</feature>
<feature type="sequence variant">
    <original>D</original>
    <variation>EAR</variation>
    <location>
        <position position="18"/>
    </location>
</feature>
<feature type="non-terminal residue">
    <location>
        <position position="21"/>
    </location>
</feature>
<keyword id="KW-0903">Direct protein sequencing</keyword>
<keyword id="KW-1015">Disulfide bond</keyword>
<keyword id="KW-0272">Extracellular matrix</keyword>
<keyword id="KW-0582">Pharmaceutical</keyword>
<keyword id="KW-0964">Secreted</keyword>
<protein>
    <recommendedName>
        <fullName>Conchiolin protein p20</fullName>
    </recommendedName>
</protein>
<organism>
    <name type="scientific">Pinctada maxima</name>
    <name type="common">Silver-lipped pearl oyster</name>
    <name type="synonym">White-lipped pearl oyster</name>
    <dbReference type="NCBI Taxonomy" id="104660"/>
    <lineage>
        <taxon>Eukaryota</taxon>
        <taxon>Metazoa</taxon>
        <taxon>Spiralia</taxon>
        <taxon>Lophotrochozoa</taxon>
        <taxon>Mollusca</taxon>
        <taxon>Bivalvia</taxon>
        <taxon>Autobranchia</taxon>
        <taxon>Pteriomorphia</taxon>
        <taxon>Pterioida</taxon>
        <taxon>Pterioidea</taxon>
        <taxon>Pteriidae</taxon>
        <taxon>Pinctada</taxon>
    </lineage>
</organism>
<dbReference type="GO" id="GO:0005576">
    <property type="term" value="C:extracellular region"/>
    <property type="evidence" value="ECO:0007669"/>
    <property type="project" value="UniProtKB-KW"/>
</dbReference>
<accession>P0CAY9</accession>
<name>MA20_PINMA</name>
<evidence type="ECO:0000256" key="1">
    <source>
        <dbReference type="SAM" id="MobiDB-lite"/>
    </source>
</evidence>
<evidence type="ECO:0000269" key="2">
    <source>
    </source>
</evidence>
<evidence type="ECO:0000305" key="3"/>
<proteinExistence type="evidence at protein level"/>
<comment type="function">
    <text evidence="2">May be specifically involved in the formation of the nacreous layer.</text>
</comment>
<comment type="subunit">
    <text evidence="2">Homooligomer; disulfide-linked. May also be disulfide-linked to insoluble organic matrix.</text>
</comment>
<comment type="subcellular location">
    <subcellularLocation>
        <location>Secreted</location>
        <location>Extracellular space</location>
        <location>Extracellular matrix</location>
    </subcellularLocation>
</comment>
<comment type="tissue specificity">
    <text>Component of conchiolin, the organic matrix of nacre. Is dispersed in calcium carbonate and also linked by disulfide bonds to the organic core of nacre.</text>
</comment>
<comment type="PTM">
    <text>According to PubMed:11250534, amino acids 4 and 11 may be sulfated or phosphorylated. By similarity with the N14 matrix protein, amino-acid 4 may be a cysteine involved in a disulfide bond.</text>
</comment>
<comment type="pharmaceutical">
    <text>P.maxima nacre is used in implants to induce in vivo osteogenesis.</text>
</comment>
<comment type="similarity">
    <text evidence="3">Belongs to the N16 matrix protein family.</text>
</comment>